<proteinExistence type="inferred from homology"/>
<reference key="1">
    <citation type="submission" date="2009-06" db="EMBL/GenBank/DDBJ databases">
        <title>Complete sequence of chromosome of Geopacillus sp. WCH70.</title>
        <authorList>
            <consortium name="US DOE Joint Genome Institute"/>
            <person name="Lucas S."/>
            <person name="Copeland A."/>
            <person name="Lapidus A."/>
            <person name="Glavina del Rio T."/>
            <person name="Dalin E."/>
            <person name="Tice H."/>
            <person name="Bruce D."/>
            <person name="Goodwin L."/>
            <person name="Pitluck S."/>
            <person name="Chertkov O."/>
            <person name="Brettin T."/>
            <person name="Detter J.C."/>
            <person name="Han C."/>
            <person name="Larimer F."/>
            <person name="Land M."/>
            <person name="Hauser L."/>
            <person name="Kyrpides N."/>
            <person name="Mikhailova N."/>
            <person name="Brumm P."/>
            <person name="Mead D.A."/>
            <person name="Richardson P."/>
        </authorList>
    </citation>
    <scope>NUCLEOTIDE SEQUENCE [LARGE SCALE GENOMIC DNA]</scope>
    <source>
        <strain>WCH70</strain>
    </source>
</reference>
<name>PURQ_GEOSW</name>
<sequence>MKFAVIVFPGSNCDVDMYHAIADELGEEVEYVWHDAENLDRFDAILLPGGFSYGDYLRSGAIARFSNVMKAVKKAADEGKPVLGVCNGFQILLEAGLLPGAMRRNNSLKFICRPVSLRVENNETMFTSAYKQGEVITIPIAHGEGNYYCDEQTLKRLIENRQIVFRYHGENPNGSLDDIAGIVNEKGNVLGMMPHPERAVDSLLGSADGLKLFQSIVKYWRETHVVTA</sequence>
<gene>
    <name evidence="1" type="primary">purQ</name>
    <name type="ordered locus">GWCH70_0258</name>
</gene>
<evidence type="ECO:0000255" key="1">
    <source>
        <dbReference type="HAMAP-Rule" id="MF_00421"/>
    </source>
</evidence>
<organism>
    <name type="scientific">Geobacillus sp. (strain WCH70)</name>
    <dbReference type="NCBI Taxonomy" id="471223"/>
    <lineage>
        <taxon>Bacteria</taxon>
        <taxon>Bacillati</taxon>
        <taxon>Bacillota</taxon>
        <taxon>Bacilli</taxon>
        <taxon>Bacillales</taxon>
        <taxon>Anoxybacillaceae</taxon>
        <taxon>Geobacillus</taxon>
    </lineage>
</organism>
<accession>C5D4H9</accession>
<keyword id="KW-0067">ATP-binding</keyword>
<keyword id="KW-0963">Cytoplasm</keyword>
<keyword id="KW-0315">Glutamine amidotransferase</keyword>
<keyword id="KW-0378">Hydrolase</keyword>
<keyword id="KW-0436">Ligase</keyword>
<keyword id="KW-0547">Nucleotide-binding</keyword>
<keyword id="KW-0658">Purine biosynthesis</keyword>
<dbReference type="EC" id="6.3.5.3" evidence="1"/>
<dbReference type="EC" id="3.5.1.2" evidence="1"/>
<dbReference type="EMBL" id="CP001638">
    <property type="protein sequence ID" value="ACS23187.1"/>
    <property type="molecule type" value="Genomic_DNA"/>
</dbReference>
<dbReference type="SMR" id="C5D4H9"/>
<dbReference type="STRING" id="471223.GWCH70_0258"/>
<dbReference type="KEGG" id="gwc:GWCH70_0258"/>
<dbReference type="eggNOG" id="COG0047">
    <property type="taxonomic scope" value="Bacteria"/>
</dbReference>
<dbReference type="HOGENOM" id="CLU_001031_3_1_9"/>
<dbReference type="OrthoDB" id="9804441at2"/>
<dbReference type="UniPathway" id="UPA00074">
    <property type="reaction ID" value="UER00128"/>
</dbReference>
<dbReference type="GO" id="GO:0005737">
    <property type="term" value="C:cytoplasm"/>
    <property type="evidence" value="ECO:0007669"/>
    <property type="project" value="UniProtKB-SubCell"/>
</dbReference>
<dbReference type="GO" id="GO:0005524">
    <property type="term" value="F:ATP binding"/>
    <property type="evidence" value="ECO:0007669"/>
    <property type="project" value="UniProtKB-KW"/>
</dbReference>
<dbReference type="GO" id="GO:0004359">
    <property type="term" value="F:glutaminase activity"/>
    <property type="evidence" value="ECO:0007669"/>
    <property type="project" value="UniProtKB-EC"/>
</dbReference>
<dbReference type="GO" id="GO:0004642">
    <property type="term" value="F:phosphoribosylformylglycinamidine synthase activity"/>
    <property type="evidence" value="ECO:0007669"/>
    <property type="project" value="UniProtKB-UniRule"/>
</dbReference>
<dbReference type="GO" id="GO:0006189">
    <property type="term" value="P:'de novo' IMP biosynthetic process"/>
    <property type="evidence" value="ECO:0007669"/>
    <property type="project" value="UniProtKB-UniRule"/>
</dbReference>
<dbReference type="CDD" id="cd01740">
    <property type="entry name" value="GATase1_FGAR_AT"/>
    <property type="match status" value="1"/>
</dbReference>
<dbReference type="FunFam" id="3.40.50.880:FF:000019">
    <property type="entry name" value="Phosphoribosylformylglycinamidine synthase subunit PurQ"/>
    <property type="match status" value="1"/>
</dbReference>
<dbReference type="Gene3D" id="3.40.50.880">
    <property type="match status" value="1"/>
</dbReference>
<dbReference type="HAMAP" id="MF_00421">
    <property type="entry name" value="PurQ"/>
    <property type="match status" value="1"/>
</dbReference>
<dbReference type="InterPro" id="IPR029062">
    <property type="entry name" value="Class_I_gatase-like"/>
</dbReference>
<dbReference type="InterPro" id="IPR010075">
    <property type="entry name" value="PRibForGlyAmidine_synth_PurQ"/>
</dbReference>
<dbReference type="NCBIfam" id="TIGR01737">
    <property type="entry name" value="FGAM_synth_I"/>
    <property type="match status" value="1"/>
</dbReference>
<dbReference type="NCBIfam" id="NF002957">
    <property type="entry name" value="PRK03619.1"/>
    <property type="match status" value="1"/>
</dbReference>
<dbReference type="PANTHER" id="PTHR47552">
    <property type="entry name" value="PHOSPHORIBOSYLFORMYLGLYCINAMIDINE SYNTHASE SUBUNIT PURQ"/>
    <property type="match status" value="1"/>
</dbReference>
<dbReference type="PANTHER" id="PTHR47552:SF1">
    <property type="entry name" value="PHOSPHORIBOSYLFORMYLGLYCINAMIDINE SYNTHASE SUBUNIT PURQ"/>
    <property type="match status" value="1"/>
</dbReference>
<dbReference type="Pfam" id="PF13507">
    <property type="entry name" value="GATase_5"/>
    <property type="match status" value="1"/>
</dbReference>
<dbReference type="PIRSF" id="PIRSF001586">
    <property type="entry name" value="FGAM_synth_I"/>
    <property type="match status" value="1"/>
</dbReference>
<dbReference type="SMART" id="SM01211">
    <property type="entry name" value="GATase_5"/>
    <property type="match status" value="1"/>
</dbReference>
<dbReference type="SUPFAM" id="SSF52317">
    <property type="entry name" value="Class I glutamine amidotransferase-like"/>
    <property type="match status" value="1"/>
</dbReference>
<dbReference type="PROSITE" id="PS51273">
    <property type="entry name" value="GATASE_TYPE_1"/>
    <property type="match status" value="1"/>
</dbReference>
<feature type="chain" id="PRO_1000206053" description="Phosphoribosylformylglycinamidine synthase subunit PurQ">
    <location>
        <begin position="1"/>
        <end position="228"/>
    </location>
</feature>
<feature type="domain" description="Glutamine amidotransferase type-1" evidence="1">
    <location>
        <begin position="3"/>
        <end position="226"/>
    </location>
</feature>
<feature type="active site" description="Nucleophile" evidence="1">
    <location>
        <position position="86"/>
    </location>
</feature>
<feature type="active site" evidence="1">
    <location>
        <position position="195"/>
    </location>
</feature>
<feature type="active site" evidence="1">
    <location>
        <position position="197"/>
    </location>
</feature>
<comment type="function">
    <text evidence="1">Part of the phosphoribosylformylglycinamidine synthase complex involved in the purines biosynthetic pathway. Catalyzes the ATP-dependent conversion of formylglycinamide ribonucleotide (FGAR) and glutamine to yield formylglycinamidine ribonucleotide (FGAM) and glutamate. The FGAM synthase complex is composed of three subunits. PurQ produces an ammonia molecule by converting glutamine to glutamate. PurL transfers the ammonia molecule to FGAR to form FGAM in an ATP-dependent manner. PurS interacts with PurQ and PurL and is thought to assist in the transfer of the ammonia molecule from PurQ to PurL.</text>
</comment>
<comment type="catalytic activity">
    <reaction evidence="1">
        <text>N(2)-formyl-N(1)-(5-phospho-beta-D-ribosyl)glycinamide + L-glutamine + ATP + H2O = 2-formamido-N(1)-(5-O-phospho-beta-D-ribosyl)acetamidine + L-glutamate + ADP + phosphate + H(+)</text>
        <dbReference type="Rhea" id="RHEA:17129"/>
        <dbReference type="ChEBI" id="CHEBI:15377"/>
        <dbReference type="ChEBI" id="CHEBI:15378"/>
        <dbReference type="ChEBI" id="CHEBI:29985"/>
        <dbReference type="ChEBI" id="CHEBI:30616"/>
        <dbReference type="ChEBI" id="CHEBI:43474"/>
        <dbReference type="ChEBI" id="CHEBI:58359"/>
        <dbReference type="ChEBI" id="CHEBI:147286"/>
        <dbReference type="ChEBI" id="CHEBI:147287"/>
        <dbReference type="ChEBI" id="CHEBI:456216"/>
        <dbReference type="EC" id="6.3.5.3"/>
    </reaction>
</comment>
<comment type="catalytic activity">
    <reaction evidence="1">
        <text>L-glutamine + H2O = L-glutamate + NH4(+)</text>
        <dbReference type="Rhea" id="RHEA:15889"/>
        <dbReference type="ChEBI" id="CHEBI:15377"/>
        <dbReference type="ChEBI" id="CHEBI:28938"/>
        <dbReference type="ChEBI" id="CHEBI:29985"/>
        <dbReference type="ChEBI" id="CHEBI:58359"/>
        <dbReference type="EC" id="3.5.1.2"/>
    </reaction>
</comment>
<comment type="pathway">
    <text evidence="1">Purine metabolism; IMP biosynthesis via de novo pathway; 5-amino-1-(5-phospho-D-ribosyl)imidazole from N(2)-formyl-N(1)-(5-phospho-D-ribosyl)glycinamide: step 1/2.</text>
</comment>
<comment type="subunit">
    <text evidence="1">Part of the FGAM synthase complex composed of 1 PurL, 1 PurQ and 2 PurS subunits.</text>
</comment>
<comment type="subcellular location">
    <subcellularLocation>
        <location evidence="1">Cytoplasm</location>
    </subcellularLocation>
</comment>
<protein>
    <recommendedName>
        <fullName evidence="1">Phosphoribosylformylglycinamidine synthase subunit PurQ</fullName>
        <shortName evidence="1">FGAM synthase</shortName>
        <ecNumber evidence="1">6.3.5.3</ecNumber>
    </recommendedName>
    <alternativeName>
        <fullName evidence="1">Formylglycinamide ribonucleotide amidotransferase subunit I</fullName>
        <shortName evidence="1">FGAR amidotransferase I</shortName>
        <shortName evidence="1">FGAR-AT I</shortName>
    </alternativeName>
    <alternativeName>
        <fullName evidence="1">Glutaminase PurQ</fullName>
        <ecNumber evidence="1">3.5.1.2</ecNumber>
    </alternativeName>
    <alternativeName>
        <fullName evidence="1">Phosphoribosylformylglycinamidine synthase subunit I</fullName>
    </alternativeName>
</protein>